<protein>
    <recommendedName>
        <fullName evidence="1">Methionyl-tRNA formyltransferase</fullName>
        <ecNumber evidence="1">2.1.2.9</ecNumber>
    </recommendedName>
</protein>
<gene>
    <name evidence="1" type="primary">fmt</name>
    <name type="ordered locus">NMA0163</name>
</gene>
<accession>Q9JWY9</accession>
<accession>A1IP23</accession>
<reference key="1">
    <citation type="journal article" date="2000" name="Nature">
        <title>Complete DNA sequence of a serogroup A strain of Neisseria meningitidis Z2491.</title>
        <authorList>
            <person name="Parkhill J."/>
            <person name="Achtman M."/>
            <person name="James K.D."/>
            <person name="Bentley S.D."/>
            <person name="Churcher C.M."/>
            <person name="Klee S.R."/>
            <person name="Morelli G."/>
            <person name="Basham D."/>
            <person name="Brown D."/>
            <person name="Chillingworth T."/>
            <person name="Davies R.M."/>
            <person name="Davis P."/>
            <person name="Devlin K."/>
            <person name="Feltwell T."/>
            <person name="Hamlin N."/>
            <person name="Holroyd S."/>
            <person name="Jagels K."/>
            <person name="Leather S."/>
            <person name="Moule S."/>
            <person name="Mungall K.L."/>
            <person name="Quail M.A."/>
            <person name="Rajandream M.A."/>
            <person name="Rutherford K.M."/>
            <person name="Simmonds M."/>
            <person name="Skelton J."/>
            <person name="Whitehead S."/>
            <person name="Spratt B.G."/>
            <person name="Barrell B.G."/>
        </authorList>
    </citation>
    <scope>NUCLEOTIDE SEQUENCE [LARGE SCALE GENOMIC DNA]</scope>
    <source>
        <strain>DSM 15465 / Z2491</strain>
    </source>
</reference>
<name>FMT_NEIMA</name>
<evidence type="ECO:0000255" key="1">
    <source>
        <dbReference type="HAMAP-Rule" id="MF_00182"/>
    </source>
</evidence>
<feature type="chain" id="PRO_0000083003" description="Methionyl-tRNA formyltransferase">
    <location>
        <begin position="1"/>
        <end position="308"/>
    </location>
</feature>
<feature type="binding site" evidence="1">
    <location>
        <begin position="110"/>
        <end position="113"/>
    </location>
    <ligand>
        <name>(6S)-5,6,7,8-tetrahydrofolate</name>
        <dbReference type="ChEBI" id="CHEBI:57453"/>
    </ligand>
</feature>
<comment type="function">
    <text evidence="1">Attaches a formyl group to the free amino group of methionyl-tRNA(fMet). The formyl group appears to play a dual role in the initiator identity of N-formylmethionyl-tRNA by promoting its recognition by IF2 and preventing the misappropriation of this tRNA by the elongation apparatus.</text>
</comment>
<comment type="catalytic activity">
    <reaction evidence="1">
        <text>L-methionyl-tRNA(fMet) + (6R)-10-formyltetrahydrofolate = N-formyl-L-methionyl-tRNA(fMet) + (6S)-5,6,7,8-tetrahydrofolate + H(+)</text>
        <dbReference type="Rhea" id="RHEA:24380"/>
        <dbReference type="Rhea" id="RHEA-COMP:9952"/>
        <dbReference type="Rhea" id="RHEA-COMP:9953"/>
        <dbReference type="ChEBI" id="CHEBI:15378"/>
        <dbReference type="ChEBI" id="CHEBI:57453"/>
        <dbReference type="ChEBI" id="CHEBI:78530"/>
        <dbReference type="ChEBI" id="CHEBI:78844"/>
        <dbReference type="ChEBI" id="CHEBI:195366"/>
        <dbReference type="EC" id="2.1.2.9"/>
    </reaction>
</comment>
<comment type="similarity">
    <text evidence="1">Belongs to the Fmt family.</text>
</comment>
<keyword id="KW-0648">Protein biosynthesis</keyword>
<keyword id="KW-0808">Transferase</keyword>
<proteinExistence type="inferred from homology"/>
<dbReference type="EC" id="2.1.2.9" evidence="1"/>
<dbReference type="EMBL" id="AL157959">
    <property type="protein sequence ID" value="CAM07480.1"/>
    <property type="molecule type" value="Genomic_DNA"/>
</dbReference>
<dbReference type="PIR" id="H82009">
    <property type="entry name" value="H82009"/>
</dbReference>
<dbReference type="RefSeq" id="WP_002245783.1">
    <property type="nucleotide sequence ID" value="NC_003116.1"/>
</dbReference>
<dbReference type="SMR" id="Q9JWY9"/>
<dbReference type="EnsemblBacteria" id="CAM07480">
    <property type="protein sequence ID" value="CAM07480"/>
    <property type="gene ID" value="NMA0163"/>
</dbReference>
<dbReference type="GeneID" id="93387183"/>
<dbReference type="KEGG" id="nma:NMA0163"/>
<dbReference type="HOGENOM" id="CLU_033347_1_2_4"/>
<dbReference type="Proteomes" id="UP000000626">
    <property type="component" value="Chromosome"/>
</dbReference>
<dbReference type="GO" id="GO:0005829">
    <property type="term" value="C:cytosol"/>
    <property type="evidence" value="ECO:0007669"/>
    <property type="project" value="TreeGrafter"/>
</dbReference>
<dbReference type="GO" id="GO:0004479">
    <property type="term" value="F:methionyl-tRNA formyltransferase activity"/>
    <property type="evidence" value="ECO:0007669"/>
    <property type="project" value="UniProtKB-UniRule"/>
</dbReference>
<dbReference type="CDD" id="cd08646">
    <property type="entry name" value="FMT_core_Met-tRNA-FMT_N"/>
    <property type="match status" value="1"/>
</dbReference>
<dbReference type="CDD" id="cd08704">
    <property type="entry name" value="Met_tRNA_FMT_C"/>
    <property type="match status" value="1"/>
</dbReference>
<dbReference type="FunFam" id="3.40.50.12230:FF:000001">
    <property type="entry name" value="Methionyl-tRNA formyltransferase"/>
    <property type="match status" value="1"/>
</dbReference>
<dbReference type="Gene3D" id="3.40.50.12230">
    <property type="match status" value="1"/>
</dbReference>
<dbReference type="HAMAP" id="MF_00182">
    <property type="entry name" value="Formyl_trans"/>
    <property type="match status" value="1"/>
</dbReference>
<dbReference type="InterPro" id="IPR005794">
    <property type="entry name" value="Fmt"/>
</dbReference>
<dbReference type="InterPro" id="IPR005793">
    <property type="entry name" value="Formyl_trans_C"/>
</dbReference>
<dbReference type="InterPro" id="IPR002376">
    <property type="entry name" value="Formyl_transf_N"/>
</dbReference>
<dbReference type="InterPro" id="IPR036477">
    <property type="entry name" value="Formyl_transf_N_sf"/>
</dbReference>
<dbReference type="InterPro" id="IPR011034">
    <property type="entry name" value="Formyl_transferase-like_C_sf"/>
</dbReference>
<dbReference type="InterPro" id="IPR001555">
    <property type="entry name" value="GART_AS"/>
</dbReference>
<dbReference type="InterPro" id="IPR044135">
    <property type="entry name" value="Met-tRNA-FMT_C"/>
</dbReference>
<dbReference type="InterPro" id="IPR041711">
    <property type="entry name" value="Met-tRNA-FMT_N"/>
</dbReference>
<dbReference type="NCBIfam" id="TIGR00460">
    <property type="entry name" value="fmt"/>
    <property type="match status" value="1"/>
</dbReference>
<dbReference type="PANTHER" id="PTHR11138">
    <property type="entry name" value="METHIONYL-TRNA FORMYLTRANSFERASE"/>
    <property type="match status" value="1"/>
</dbReference>
<dbReference type="PANTHER" id="PTHR11138:SF5">
    <property type="entry name" value="METHIONYL-TRNA FORMYLTRANSFERASE, MITOCHONDRIAL"/>
    <property type="match status" value="1"/>
</dbReference>
<dbReference type="Pfam" id="PF02911">
    <property type="entry name" value="Formyl_trans_C"/>
    <property type="match status" value="1"/>
</dbReference>
<dbReference type="Pfam" id="PF00551">
    <property type="entry name" value="Formyl_trans_N"/>
    <property type="match status" value="1"/>
</dbReference>
<dbReference type="SUPFAM" id="SSF50486">
    <property type="entry name" value="FMT C-terminal domain-like"/>
    <property type="match status" value="1"/>
</dbReference>
<dbReference type="SUPFAM" id="SSF53328">
    <property type="entry name" value="Formyltransferase"/>
    <property type="match status" value="1"/>
</dbReference>
<dbReference type="PROSITE" id="PS00373">
    <property type="entry name" value="GART"/>
    <property type="match status" value="1"/>
</dbReference>
<sequence>MKVIFAGTPDFAAAALKAVAAAGFEIPLVLTQPDRPKGRGMQLTAPPVKQAALELGLRVEQPEKLRNNAEALQMLKEVEADVMVVAAYGLILPQEVLDTPKHGCLNIHASLLPRWRGAAPIQRAIEAGDAETGVCIMQMDIGLDTGDVVSEHRYAIQPTDTANEVHDALMEIGAAAVVADLQQLQSKGRLNAVKQPEEGVTYAQKLSKEEARIDWSKSAAVIERKIRAFNPVPAAWVEYQGKPMKIRRAEVVAQQGAAGEVLSCSADGLVVACGENALKITELQPAGGRRMNIAAFAAGRHIEAGTKL</sequence>
<organism>
    <name type="scientific">Neisseria meningitidis serogroup A / serotype 4A (strain DSM 15465 / Z2491)</name>
    <dbReference type="NCBI Taxonomy" id="122587"/>
    <lineage>
        <taxon>Bacteria</taxon>
        <taxon>Pseudomonadati</taxon>
        <taxon>Pseudomonadota</taxon>
        <taxon>Betaproteobacteria</taxon>
        <taxon>Neisseriales</taxon>
        <taxon>Neisseriaceae</taxon>
        <taxon>Neisseria</taxon>
    </lineage>
</organism>